<comment type="subunit">
    <text evidence="1">Part of the 50S ribosomal subunit. Contacts protein L32.</text>
</comment>
<comment type="similarity">
    <text evidence="1">Belongs to the bacterial ribosomal protein bL17 family.</text>
</comment>
<evidence type="ECO:0000255" key="1">
    <source>
        <dbReference type="HAMAP-Rule" id="MF_01368"/>
    </source>
</evidence>
<evidence type="ECO:0000305" key="2"/>
<organism>
    <name type="scientific">Psychrobacter cryohalolentis (strain ATCC BAA-1226 / DSM 17306 / VKM B-2378 / K5)</name>
    <dbReference type="NCBI Taxonomy" id="335284"/>
    <lineage>
        <taxon>Bacteria</taxon>
        <taxon>Pseudomonadati</taxon>
        <taxon>Pseudomonadota</taxon>
        <taxon>Gammaproteobacteria</taxon>
        <taxon>Moraxellales</taxon>
        <taxon>Moraxellaceae</taxon>
        <taxon>Psychrobacter</taxon>
    </lineage>
</organism>
<protein>
    <recommendedName>
        <fullName evidence="1">Large ribosomal subunit protein bL17</fullName>
    </recommendedName>
    <alternativeName>
        <fullName evidence="2">50S ribosomal protein L17</fullName>
    </alternativeName>
</protein>
<sequence length="119" mass="13554">MRHRKSGVKLGRTGSHRKAMFQNMTNSLFEHELIKTTLPKAKELRRVAEPLITMAKEDSVANRRLAFSRMRSKAMVGKLFGTLGPRYQARPGGYLRIVKCGYRDGDNAPMAYVELVDRD</sequence>
<reference key="1">
    <citation type="submission" date="2006-03" db="EMBL/GenBank/DDBJ databases">
        <title>Complete sequence of chromosome of Psychrobacter cryohalolentis K5.</title>
        <authorList>
            <consortium name="US DOE Joint Genome Institute"/>
            <person name="Copeland A."/>
            <person name="Lucas S."/>
            <person name="Lapidus A."/>
            <person name="Barry K."/>
            <person name="Detter J.C."/>
            <person name="Glavina T."/>
            <person name="Hammon N."/>
            <person name="Israni S."/>
            <person name="Dalin E."/>
            <person name="Tice H."/>
            <person name="Pitluck S."/>
            <person name="Brettin T."/>
            <person name="Bruce D."/>
            <person name="Han C."/>
            <person name="Tapia R."/>
            <person name="Sims D.R."/>
            <person name="Gilna P."/>
            <person name="Schmutz J."/>
            <person name="Larimer F."/>
            <person name="Land M."/>
            <person name="Hauser L."/>
            <person name="Kyrpides N."/>
            <person name="Kim E."/>
            <person name="Richardson P."/>
        </authorList>
    </citation>
    <scope>NUCLEOTIDE SEQUENCE [LARGE SCALE GENOMIC DNA]</scope>
    <source>
        <strain>ATCC BAA-1226 / DSM 17306 / VKM B-2378 / K5</strain>
    </source>
</reference>
<name>RL17_PSYCK</name>
<gene>
    <name evidence="1" type="primary">rplQ</name>
    <name type="ordered locus">Pcryo_0510</name>
</gene>
<proteinExistence type="inferred from homology"/>
<keyword id="KW-0687">Ribonucleoprotein</keyword>
<keyword id="KW-0689">Ribosomal protein</keyword>
<feature type="chain" id="PRO_1000055924" description="Large ribosomal subunit protein bL17">
    <location>
        <begin position="1"/>
        <end position="119"/>
    </location>
</feature>
<dbReference type="EMBL" id="CP000323">
    <property type="protein sequence ID" value="ABE74293.1"/>
    <property type="molecule type" value="Genomic_DNA"/>
</dbReference>
<dbReference type="RefSeq" id="WP_011279809.1">
    <property type="nucleotide sequence ID" value="NC_007969.1"/>
</dbReference>
<dbReference type="SMR" id="Q1QDG0"/>
<dbReference type="STRING" id="335284.Pcryo_0510"/>
<dbReference type="KEGG" id="pcr:Pcryo_0510"/>
<dbReference type="eggNOG" id="COG0203">
    <property type="taxonomic scope" value="Bacteria"/>
</dbReference>
<dbReference type="HOGENOM" id="CLU_074407_2_0_6"/>
<dbReference type="Proteomes" id="UP000002425">
    <property type="component" value="Chromosome"/>
</dbReference>
<dbReference type="GO" id="GO:0022625">
    <property type="term" value="C:cytosolic large ribosomal subunit"/>
    <property type="evidence" value="ECO:0007669"/>
    <property type="project" value="TreeGrafter"/>
</dbReference>
<dbReference type="GO" id="GO:0003735">
    <property type="term" value="F:structural constituent of ribosome"/>
    <property type="evidence" value="ECO:0007669"/>
    <property type="project" value="InterPro"/>
</dbReference>
<dbReference type="GO" id="GO:0006412">
    <property type="term" value="P:translation"/>
    <property type="evidence" value="ECO:0007669"/>
    <property type="project" value="UniProtKB-UniRule"/>
</dbReference>
<dbReference type="FunFam" id="3.90.1030.10:FF:000001">
    <property type="entry name" value="50S ribosomal protein L17"/>
    <property type="match status" value="1"/>
</dbReference>
<dbReference type="Gene3D" id="3.90.1030.10">
    <property type="entry name" value="Ribosomal protein L17"/>
    <property type="match status" value="1"/>
</dbReference>
<dbReference type="HAMAP" id="MF_01368">
    <property type="entry name" value="Ribosomal_bL17"/>
    <property type="match status" value="1"/>
</dbReference>
<dbReference type="InterPro" id="IPR000456">
    <property type="entry name" value="Ribosomal_bL17"/>
</dbReference>
<dbReference type="InterPro" id="IPR047859">
    <property type="entry name" value="Ribosomal_bL17_CS"/>
</dbReference>
<dbReference type="InterPro" id="IPR036373">
    <property type="entry name" value="Ribosomal_bL17_sf"/>
</dbReference>
<dbReference type="NCBIfam" id="TIGR00059">
    <property type="entry name" value="L17"/>
    <property type="match status" value="1"/>
</dbReference>
<dbReference type="PANTHER" id="PTHR14413:SF16">
    <property type="entry name" value="LARGE RIBOSOMAL SUBUNIT PROTEIN BL17M"/>
    <property type="match status" value="1"/>
</dbReference>
<dbReference type="PANTHER" id="PTHR14413">
    <property type="entry name" value="RIBOSOMAL PROTEIN L17"/>
    <property type="match status" value="1"/>
</dbReference>
<dbReference type="Pfam" id="PF01196">
    <property type="entry name" value="Ribosomal_L17"/>
    <property type="match status" value="1"/>
</dbReference>
<dbReference type="SUPFAM" id="SSF64263">
    <property type="entry name" value="Prokaryotic ribosomal protein L17"/>
    <property type="match status" value="1"/>
</dbReference>
<dbReference type="PROSITE" id="PS01167">
    <property type="entry name" value="RIBOSOMAL_L17"/>
    <property type="match status" value="1"/>
</dbReference>
<accession>Q1QDG0</accession>